<comment type="function">
    <text evidence="2 3 4 5 6 7 8 9 12 13">12-alpha,13-alpha-dihydroxyfumitremorgin C prenyltransferase; part of the gene cluster that mediates the biosynthesis of fumitremorgins, indole alkaloids that carry not only intriguing chemical structures, but also interesting biological and pharmacological activities (PubMed:18683158, PubMed:23649274). The biosynthesis of fumitremorgin-type alkaloids begins by condensation of the two amino acids L-tryptophan and L-proline to brevianamide F, catalyzed by the non-ribosomal peptide synthetase ftmA (PubMed:16755625). Brevianamide F is then prenylated by the prenyltransferase ftmPT1/ftmB in the presence of dimethylallyl diphosphate, resulting in the formation of tryprostatin B (PubMed:16000710, PubMed:21105662, PubMed:23090579). The three cytochrome P450 monooxygenases, ftmP450-1/ftmC, ftmP450-2/ftmE and ftmP450-3/FtmG, are responsible for the conversion of tryprostatin B to 6-hydroxytryprostatin B, tryprostatin A to fumitremorgin C and fumitremorgin C to 12,13-dihydroxyfumitremorgin C, respectively (PubMed:19226505). The putative methyltransferase ftmMT/ftmD is expected for the conversion of 6-hydroxytryprostatin B to tryprostatin A (Probable). FtmPT2/FtmH catalyzes the prenylation of 12,13-dihydroxyfumitre-morgin C in the presence of dimethylallyl diphosphate, resulting in the formation of fumitremorgin B (PubMed:18683158). Fumitremorgin B is further converted to verruculogen by ftmOx1/ftmF via the insertion of an endoperoxide bond between the two prenyl moieties (PubMed:19763315). In some fungal species, verruculogen is further converted to fumitremorgin A, but the enzymes involved in this step have not been identified yet (Probable).</text>
</comment>
<comment type="catalytic activity">
    <reaction evidence="4">
        <text>12alpha,13alpha-dihydroxyfumitremorgin C + dimethylallyl diphosphate = fumitremorgin B + diphosphate</text>
        <dbReference type="Rhea" id="RHEA:35971"/>
        <dbReference type="ChEBI" id="CHEBI:33019"/>
        <dbReference type="ChEBI" id="CHEBI:57623"/>
        <dbReference type="ChEBI" id="CHEBI:64531"/>
        <dbReference type="ChEBI" id="CHEBI:72764"/>
        <dbReference type="EC" id="2.5.1.110"/>
    </reaction>
</comment>
<comment type="pathway">
    <text evidence="4 9">Mycotoxin biosynthesis.</text>
</comment>
<comment type="similarity">
    <text evidence="12">Belongs to the tryptophan dimethylallyltransferase family.</text>
</comment>
<comment type="caution">
    <text evidence="14">In contrast to other A.fumigatus strains, strain ATCC MYA-4609 does not produce indole alkaloids such as fumitremorgins and verruculogen. While the biosynthetic pathway is complete, a variation in the O-methyltransferase FtmD (AC Q4WAW6) abolishes production of the tryprostatin A intermediate (PubMed:23649274).</text>
</comment>
<feature type="chain" id="PRO_0000424116" description="12-alpha,13-alpha-dihydroxyfumitremorgin C prenyltransferase">
    <location>
        <begin position="1"/>
        <end position="427"/>
    </location>
</feature>
<feature type="binding site" evidence="1">
    <location>
        <position position="94"/>
    </location>
    <ligand>
        <name>substrate</name>
    </ligand>
</feature>
<feature type="binding site" evidence="1">
    <location>
        <position position="105"/>
    </location>
    <ligand>
        <name>dimethylallyl diphosphate</name>
        <dbReference type="ChEBI" id="CHEBI:57623"/>
    </ligand>
</feature>
<feature type="binding site" evidence="1">
    <location>
        <position position="192"/>
    </location>
    <ligand>
        <name>dimethylallyl diphosphate</name>
        <dbReference type="ChEBI" id="CHEBI:57623"/>
    </ligand>
</feature>
<feature type="binding site" evidence="1">
    <location>
        <position position="194"/>
    </location>
    <ligand>
        <name>dimethylallyl diphosphate</name>
        <dbReference type="ChEBI" id="CHEBI:57623"/>
    </ligand>
</feature>
<feature type="binding site" evidence="1">
    <location>
        <position position="268"/>
    </location>
    <ligand>
        <name>dimethylallyl diphosphate</name>
        <dbReference type="ChEBI" id="CHEBI:57623"/>
    </ligand>
</feature>
<feature type="binding site" evidence="1">
    <location>
        <position position="353"/>
    </location>
    <ligand>
        <name>dimethylallyl diphosphate</name>
        <dbReference type="ChEBI" id="CHEBI:57623"/>
    </ligand>
</feature>
<feature type="binding site" evidence="1">
    <location>
        <position position="355"/>
    </location>
    <ligand>
        <name>dimethylallyl diphosphate</name>
        <dbReference type="ChEBI" id="CHEBI:57623"/>
    </ligand>
</feature>
<feature type="binding site" evidence="1">
    <location>
        <position position="419"/>
    </location>
    <ligand>
        <name>dimethylallyl diphosphate</name>
        <dbReference type="ChEBI" id="CHEBI:57623"/>
    </ligand>
</feature>
<feature type="binding site" evidence="1">
    <location>
        <position position="423"/>
    </location>
    <ligand>
        <name>dimethylallyl diphosphate</name>
        <dbReference type="ChEBI" id="CHEBI:57623"/>
    </ligand>
</feature>
<sequence length="427" mass="48530">MTIPTEISCPEEDAFQLLDKFSWFPSDDQRRWWEYTGPYLLKLLRDAKYPQKDQVPCLYLLQQLLVPYLGTFPVVGQAPLPWWSNVTTYGVPFELSWNLLHNIVRIGFEPLSHLAESGVDAFNKTAPEECVSRLACLDNTIDLARFRHFQHHLLVTPEEETWLLKEKAPLAKSGRGQQTLAVEFQNGGISAKAYFFPGMKSLATGLSPGKLILDSIERLALPGLKEPVHHLRSTLGLQDDGHPTDTAIAPFLLGVDLCTPERSRLKFYVTDQVVSWDRVADMWTLRGKRLEDPQCADGLALLRKLWDLLAIPEGYRSNIRPDFAFGTPPPEDYRPVMMANWTLSPKKKFPDPQIYLLTVGMNDAVVMDALVAFYEVLGWTDLASTYKDKVASYFPGPDFTKTNYIHSGVSFSYRHSKPYLSVYYSPF</sequence>
<accession>Q4WAX1</accession>
<name>FTMH_ASPFU</name>
<organism>
    <name type="scientific">Aspergillus fumigatus (strain ATCC MYA-4609 / CBS 101355 / FGSC A1100 / Af293)</name>
    <name type="common">Neosartorya fumigata</name>
    <dbReference type="NCBI Taxonomy" id="330879"/>
    <lineage>
        <taxon>Eukaryota</taxon>
        <taxon>Fungi</taxon>
        <taxon>Dikarya</taxon>
        <taxon>Ascomycota</taxon>
        <taxon>Pezizomycotina</taxon>
        <taxon>Eurotiomycetes</taxon>
        <taxon>Eurotiomycetidae</taxon>
        <taxon>Eurotiales</taxon>
        <taxon>Aspergillaceae</taxon>
        <taxon>Aspergillus</taxon>
        <taxon>Aspergillus subgen. Fumigati</taxon>
    </lineage>
</organism>
<dbReference type="EC" id="2.5.1.110" evidence="4"/>
<dbReference type="EMBL" id="AAHF01000014">
    <property type="protein sequence ID" value="EAL85141.1"/>
    <property type="molecule type" value="Genomic_DNA"/>
</dbReference>
<dbReference type="RefSeq" id="XP_747179.1">
    <property type="nucleotide sequence ID" value="XM_742086.1"/>
</dbReference>
<dbReference type="SMR" id="Q4WAX1"/>
<dbReference type="STRING" id="330879.Q4WAX1"/>
<dbReference type="EnsemblFungi" id="EAL85141">
    <property type="protein sequence ID" value="EAL85141"/>
    <property type="gene ID" value="AFUA_8G00250"/>
</dbReference>
<dbReference type="GeneID" id="3504526"/>
<dbReference type="KEGG" id="afm:AFUA_8G00250"/>
<dbReference type="VEuPathDB" id="FungiDB:Afu8g00250"/>
<dbReference type="eggNOG" id="ENOG502S2XP">
    <property type="taxonomic scope" value="Eukaryota"/>
</dbReference>
<dbReference type="HOGENOM" id="CLU_037431_0_0_1"/>
<dbReference type="InParanoid" id="Q4WAX1"/>
<dbReference type="OMA" id="WNLLHNI"/>
<dbReference type="OrthoDB" id="5392033at2759"/>
<dbReference type="Proteomes" id="UP000002530">
    <property type="component" value="Chromosome 8"/>
</dbReference>
<dbReference type="GO" id="GO:0004659">
    <property type="term" value="F:prenyltransferase activity"/>
    <property type="evidence" value="ECO:0000314"/>
    <property type="project" value="AspGD"/>
</dbReference>
<dbReference type="GO" id="GO:1900772">
    <property type="term" value="P:fumitremorgin B biosynthetic process"/>
    <property type="evidence" value="ECO:0000314"/>
    <property type="project" value="AspGD"/>
</dbReference>
<dbReference type="GO" id="GO:1902181">
    <property type="term" value="P:verruculogen biosynthetic process"/>
    <property type="evidence" value="ECO:0000314"/>
    <property type="project" value="GO_Central"/>
</dbReference>
<dbReference type="CDD" id="cd13929">
    <property type="entry name" value="PT-DMATS_CymD"/>
    <property type="match status" value="1"/>
</dbReference>
<dbReference type="InterPro" id="IPR033964">
    <property type="entry name" value="Aro_prenylTrfase"/>
</dbReference>
<dbReference type="InterPro" id="IPR017795">
    <property type="entry name" value="Aro_prenylTrfase_DMATS"/>
</dbReference>
<dbReference type="InterPro" id="IPR012148">
    <property type="entry name" value="DMATS-type_fun"/>
</dbReference>
<dbReference type="NCBIfam" id="TIGR03429">
    <property type="entry name" value="arom_pren_DMATS"/>
    <property type="match status" value="1"/>
</dbReference>
<dbReference type="PANTHER" id="PTHR40627">
    <property type="entry name" value="INDOLE PRENYLTRANSFERASE TDIB-RELATED"/>
    <property type="match status" value="1"/>
</dbReference>
<dbReference type="PANTHER" id="PTHR40627:SF3">
    <property type="entry name" value="PRENYLTRANSFERASE ASQH2-RELATED"/>
    <property type="match status" value="1"/>
</dbReference>
<dbReference type="Pfam" id="PF11991">
    <property type="entry name" value="Trp_DMAT"/>
    <property type="match status" value="1"/>
</dbReference>
<dbReference type="PIRSF" id="PIRSF000509">
    <property type="entry name" value="Trp_DMAT"/>
    <property type="match status" value="1"/>
</dbReference>
<dbReference type="SFLD" id="SFLDS00036">
    <property type="entry name" value="Aromatic_Prenyltransferase"/>
    <property type="match status" value="1"/>
</dbReference>
<dbReference type="SFLD" id="SFLDG01162">
    <property type="entry name" value="I"/>
    <property type="match status" value="1"/>
</dbReference>
<protein>
    <recommendedName>
        <fullName evidence="10">12-alpha,13-alpha-dihydroxyfumitremorgin C prenyltransferase</fullName>
        <ecNumber evidence="4">2.5.1.110</ecNumber>
    </recommendedName>
    <alternativeName>
        <fullName evidence="11">Fumitremorgin biosynthesis protein H</fullName>
    </alternativeName>
</protein>
<evidence type="ECO:0000250" key="1">
    <source>
        <dbReference type="UniProtKB" id="Q4WAW7"/>
    </source>
</evidence>
<evidence type="ECO:0000269" key="2">
    <source>
    </source>
</evidence>
<evidence type="ECO:0000269" key="3">
    <source>
    </source>
</evidence>
<evidence type="ECO:0000269" key="4">
    <source>
    </source>
</evidence>
<evidence type="ECO:0000269" key="5">
    <source>
    </source>
</evidence>
<evidence type="ECO:0000269" key="6">
    <source>
    </source>
</evidence>
<evidence type="ECO:0000269" key="7">
    <source>
    </source>
</evidence>
<evidence type="ECO:0000269" key="8">
    <source>
    </source>
</evidence>
<evidence type="ECO:0000269" key="9">
    <source>
    </source>
</evidence>
<evidence type="ECO:0000303" key="10">
    <source>
    </source>
</evidence>
<evidence type="ECO:0000303" key="11">
    <source>
    </source>
</evidence>
<evidence type="ECO:0000305" key="12"/>
<evidence type="ECO:0000305" key="13">
    <source>
    </source>
</evidence>
<evidence type="ECO:0000305" key="14">
    <source>
    </source>
</evidence>
<gene>
    <name evidence="10" type="primary">ftmPT2</name>
    <name evidence="11" type="synonym">ftmH</name>
    <name type="ORF">AFUA_8G00250</name>
</gene>
<keyword id="KW-0637">Prenyltransferase</keyword>
<keyword id="KW-1185">Reference proteome</keyword>
<keyword id="KW-0808">Transferase</keyword>
<keyword id="KW-0843">Virulence</keyword>
<reference key="1">
    <citation type="journal article" date="2005" name="Nature">
        <title>Genomic sequence of the pathogenic and allergenic filamentous fungus Aspergillus fumigatus.</title>
        <authorList>
            <person name="Nierman W.C."/>
            <person name="Pain A."/>
            <person name="Anderson M.J."/>
            <person name="Wortman J.R."/>
            <person name="Kim H.S."/>
            <person name="Arroyo J."/>
            <person name="Berriman M."/>
            <person name="Abe K."/>
            <person name="Archer D.B."/>
            <person name="Bermejo C."/>
            <person name="Bennett J.W."/>
            <person name="Bowyer P."/>
            <person name="Chen D."/>
            <person name="Collins M."/>
            <person name="Coulsen R."/>
            <person name="Davies R."/>
            <person name="Dyer P.S."/>
            <person name="Farman M.L."/>
            <person name="Fedorova N."/>
            <person name="Fedorova N.D."/>
            <person name="Feldblyum T.V."/>
            <person name="Fischer R."/>
            <person name="Fosker N."/>
            <person name="Fraser A."/>
            <person name="Garcia J.L."/>
            <person name="Garcia M.J."/>
            <person name="Goble A."/>
            <person name="Goldman G.H."/>
            <person name="Gomi K."/>
            <person name="Griffith-Jones S."/>
            <person name="Gwilliam R."/>
            <person name="Haas B.J."/>
            <person name="Haas H."/>
            <person name="Harris D.E."/>
            <person name="Horiuchi H."/>
            <person name="Huang J."/>
            <person name="Humphray S."/>
            <person name="Jimenez J."/>
            <person name="Keller N."/>
            <person name="Khouri H."/>
            <person name="Kitamoto K."/>
            <person name="Kobayashi T."/>
            <person name="Konzack S."/>
            <person name="Kulkarni R."/>
            <person name="Kumagai T."/>
            <person name="Lafton A."/>
            <person name="Latge J.-P."/>
            <person name="Li W."/>
            <person name="Lord A."/>
            <person name="Lu C."/>
            <person name="Majoros W.H."/>
            <person name="May G.S."/>
            <person name="Miller B.L."/>
            <person name="Mohamoud Y."/>
            <person name="Molina M."/>
            <person name="Monod M."/>
            <person name="Mouyna I."/>
            <person name="Mulligan S."/>
            <person name="Murphy L.D."/>
            <person name="O'Neil S."/>
            <person name="Paulsen I."/>
            <person name="Penalva M.A."/>
            <person name="Pertea M."/>
            <person name="Price C."/>
            <person name="Pritchard B.L."/>
            <person name="Quail M.A."/>
            <person name="Rabbinowitsch E."/>
            <person name="Rawlins N."/>
            <person name="Rajandream M.A."/>
            <person name="Reichard U."/>
            <person name="Renauld H."/>
            <person name="Robson G.D."/>
            <person name="Rodriguez de Cordoba S."/>
            <person name="Rodriguez-Pena J.M."/>
            <person name="Ronning C.M."/>
            <person name="Rutter S."/>
            <person name="Salzberg S.L."/>
            <person name="Sanchez M."/>
            <person name="Sanchez-Ferrero J.C."/>
            <person name="Saunders D."/>
            <person name="Seeger K."/>
            <person name="Squares R."/>
            <person name="Squares S."/>
            <person name="Takeuchi M."/>
            <person name="Tekaia F."/>
            <person name="Turner G."/>
            <person name="Vazquez de Aldana C.R."/>
            <person name="Weidman J."/>
            <person name="White O."/>
            <person name="Woodward J.R."/>
            <person name="Yu J.-H."/>
            <person name="Fraser C.M."/>
            <person name="Galagan J.E."/>
            <person name="Asai K."/>
            <person name="Machida M."/>
            <person name="Hall N."/>
            <person name="Barrell B.G."/>
            <person name="Denning D.W."/>
        </authorList>
    </citation>
    <scope>NUCLEOTIDE SEQUENCE [LARGE SCALE GENOMIC DNA]</scope>
    <source>
        <strain>ATCC MYA-4609 / CBS 101355 / FGSC A1100 / Af293</strain>
    </source>
</reference>
<reference key="2">
    <citation type="journal article" date="2005" name="Microbiology">
        <title>Overproduction, purification and characterization of FtmPT1, a brevianamide F prenyltransferase from Aspergillus fumigatus.</title>
        <authorList>
            <person name="Grundmann A."/>
            <person name="Li S.M."/>
        </authorList>
    </citation>
    <scope>FUNCTION</scope>
</reference>
<reference key="3">
    <citation type="journal article" date="2006" name="ChemBioChem">
        <title>The fumitremorgin gene cluster of Aspergillus fumigatus: identification of a gene encoding brevianamide F synthetase.</title>
        <authorList>
            <person name="Maiya S."/>
            <person name="Grundmann A."/>
            <person name="Li S.M."/>
            <person name="Turner G."/>
        </authorList>
    </citation>
    <scope>FUNCTION</scope>
</reference>
<reference key="4">
    <citation type="journal article" date="2008" name="ChemBioChem">
        <title>FtmPT2, an N-prenyltransferase from Aspergillus fumigatus, catalyses the last step in the biosynthesis of fumitremorgin B.</title>
        <authorList>
            <person name="Grundmann A."/>
            <person name="Kuznetsova T."/>
            <person name="Afiyatullov S.S."/>
            <person name="Li S.M."/>
        </authorList>
    </citation>
    <scope>FUNCTION</scope>
    <scope>CATALYTIC ACTIVITY</scope>
    <scope>PATHWAY</scope>
</reference>
<reference key="5">
    <citation type="journal article" date="2009" name="ChemBioChem">
        <title>Identification of cytochrome P450s required for fumitremorgin biosynthesis in Aspergillus fumigatus.</title>
        <authorList>
            <person name="Kato N."/>
            <person name="Suzuki H."/>
            <person name="Takagi H."/>
            <person name="Asami Y."/>
            <person name="Kakeya H."/>
            <person name="Uramoto M."/>
            <person name="Usui T."/>
            <person name="Takahashi S."/>
            <person name="Sugimoto Y."/>
            <person name="Osada H."/>
        </authorList>
    </citation>
    <scope>FUNCTION</scope>
</reference>
<reference key="6">
    <citation type="journal article" date="2009" name="Org. Biomol. Chem.">
        <title>FtmOx1, a non-heme Fe(II) and alpha-ketoglutarate-dependent dioxygenase, catalyses the endoperoxide formation of verruculogen in Aspergillus fumigatus.</title>
        <authorList>
            <person name="Steffan N."/>
            <person name="Grundmann A."/>
            <person name="Afiyatullov S."/>
            <person name="Ruan H."/>
            <person name="Li S.M."/>
        </authorList>
    </citation>
    <scope>FUNCTION</scope>
</reference>
<reference key="7">
    <citation type="journal article" date="2010" name="J. Am. Chem. Soc.">
        <title>Structure-function analysis of an enzymatic prenyl transfer reaction identifies a reaction chamber with modifiable specificity.</title>
        <authorList>
            <person name="Jost M."/>
            <person name="Zocher G."/>
            <person name="Tarcz S."/>
            <person name="Matuschek M."/>
            <person name="Xie X."/>
            <person name="Li S.M."/>
            <person name="Stehle T."/>
        </authorList>
    </citation>
    <scope>FUNCTION</scope>
</reference>
<reference key="8">
    <citation type="journal article" date="2012" name="Org. Biomol. Chem.">
        <title>Breaking the regioselectivity of indole prenyltransferases: identification of regular C3-prenylated hexahydropyrrolo[2,3-b]indoles as side products of the regular C2-prenyltransferase FtmPT1.</title>
        <authorList>
            <person name="Wollinsky B."/>
            <person name="Ludwig L."/>
            <person name="Xie X."/>
            <person name="Li S.M."/>
        </authorList>
    </citation>
    <scope>FUNCTION</scope>
</reference>
<reference key="9">
    <citation type="journal article" date="2013" name="Biosci. Biotechnol. Biochem.">
        <title>A point mutation in ftmD blocks the fumitremorgin biosynthetic pathway in Aspergillus fumigatus strain Af293.</title>
        <authorList>
            <person name="Kato N."/>
            <person name="Suzuki H."/>
            <person name="Okumura H."/>
            <person name="Takahashi S."/>
            <person name="Osada H."/>
        </authorList>
    </citation>
    <scope>FUNCTION</scope>
    <scope>PATHWAY</scope>
    <source>
        <strain>ATCC MYA-4609 / CBS 101355 / FGSC A1100 / Af293</strain>
    </source>
</reference>
<proteinExistence type="evidence at protein level"/>